<organism>
    <name type="scientific">Phenylobacterium zucineum (strain HLK1)</name>
    <dbReference type="NCBI Taxonomy" id="450851"/>
    <lineage>
        <taxon>Bacteria</taxon>
        <taxon>Pseudomonadati</taxon>
        <taxon>Pseudomonadota</taxon>
        <taxon>Alphaproteobacteria</taxon>
        <taxon>Caulobacterales</taxon>
        <taxon>Caulobacteraceae</taxon>
        <taxon>Phenylobacterium</taxon>
    </lineage>
</organism>
<evidence type="ECO:0000255" key="1">
    <source>
        <dbReference type="HAMAP-Rule" id="MF_00301"/>
    </source>
</evidence>
<protein>
    <recommendedName>
        <fullName evidence="1">Homoserine kinase</fullName>
        <shortName evidence="1">HK</shortName>
        <shortName evidence="1">HSK</shortName>
        <ecNumber evidence="1">2.7.1.39</ecNumber>
    </recommendedName>
</protein>
<proteinExistence type="inferred from homology"/>
<dbReference type="EC" id="2.7.1.39" evidence="1"/>
<dbReference type="EMBL" id="CP000747">
    <property type="protein sequence ID" value="ACG79299.1"/>
    <property type="molecule type" value="Genomic_DNA"/>
</dbReference>
<dbReference type="RefSeq" id="WP_012523437.1">
    <property type="nucleotide sequence ID" value="NC_011144.1"/>
</dbReference>
<dbReference type="SMR" id="B4R8T4"/>
<dbReference type="STRING" id="450851.PHZ_c2890"/>
<dbReference type="KEGG" id="pzu:PHZ_c2890"/>
<dbReference type="eggNOG" id="COG2334">
    <property type="taxonomic scope" value="Bacteria"/>
</dbReference>
<dbReference type="HOGENOM" id="CLU_053300_1_0_5"/>
<dbReference type="OrthoDB" id="9777460at2"/>
<dbReference type="UniPathway" id="UPA00050">
    <property type="reaction ID" value="UER00064"/>
</dbReference>
<dbReference type="Proteomes" id="UP000001868">
    <property type="component" value="Chromosome"/>
</dbReference>
<dbReference type="GO" id="GO:0005524">
    <property type="term" value="F:ATP binding"/>
    <property type="evidence" value="ECO:0007669"/>
    <property type="project" value="UniProtKB-KW"/>
</dbReference>
<dbReference type="GO" id="GO:0004413">
    <property type="term" value="F:homoserine kinase activity"/>
    <property type="evidence" value="ECO:0007669"/>
    <property type="project" value="UniProtKB-UniRule"/>
</dbReference>
<dbReference type="GO" id="GO:0009088">
    <property type="term" value="P:threonine biosynthetic process"/>
    <property type="evidence" value="ECO:0007669"/>
    <property type="project" value="UniProtKB-UniRule"/>
</dbReference>
<dbReference type="CDD" id="cd05153">
    <property type="entry name" value="HomoserineK_II"/>
    <property type="match status" value="1"/>
</dbReference>
<dbReference type="Gene3D" id="3.90.1200.10">
    <property type="match status" value="1"/>
</dbReference>
<dbReference type="Gene3D" id="3.30.200.20">
    <property type="entry name" value="Phosphorylase Kinase, domain 1"/>
    <property type="match status" value="1"/>
</dbReference>
<dbReference type="HAMAP" id="MF_00301">
    <property type="entry name" value="Homoser_kinase_2"/>
    <property type="match status" value="1"/>
</dbReference>
<dbReference type="InterPro" id="IPR002575">
    <property type="entry name" value="Aminoglycoside_PTrfase"/>
</dbReference>
<dbReference type="InterPro" id="IPR005280">
    <property type="entry name" value="Homoserine_kinase_II"/>
</dbReference>
<dbReference type="InterPro" id="IPR011009">
    <property type="entry name" value="Kinase-like_dom_sf"/>
</dbReference>
<dbReference type="InterPro" id="IPR050249">
    <property type="entry name" value="Pseudomonas-type_ThrB"/>
</dbReference>
<dbReference type="NCBIfam" id="NF003558">
    <property type="entry name" value="PRK05231.1"/>
    <property type="match status" value="1"/>
</dbReference>
<dbReference type="NCBIfam" id="TIGR00938">
    <property type="entry name" value="thrB_alt"/>
    <property type="match status" value="1"/>
</dbReference>
<dbReference type="PANTHER" id="PTHR21064:SF6">
    <property type="entry name" value="AMINOGLYCOSIDE PHOSPHOTRANSFERASE DOMAIN-CONTAINING PROTEIN"/>
    <property type="match status" value="1"/>
</dbReference>
<dbReference type="PANTHER" id="PTHR21064">
    <property type="entry name" value="AMINOGLYCOSIDE PHOSPHOTRANSFERASE DOMAIN-CONTAINING PROTEIN-RELATED"/>
    <property type="match status" value="1"/>
</dbReference>
<dbReference type="Pfam" id="PF01636">
    <property type="entry name" value="APH"/>
    <property type="match status" value="1"/>
</dbReference>
<dbReference type="SUPFAM" id="SSF56112">
    <property type="entry name" value="Protein kinase-like (PK-like)"/>
    <property type="match status" value="1"/>
</dbReference>
<feature type="chain" id="PRO_1000115437" description="Homoserine kinase">
    <location>
        <begin position="1"/>
        <end position="323"/>
    </location>
</feature>
<name>KHSE_PHEZH</name>
<gene>
    <name evidence="1" type="primary">thrB</name>
    <name type="ordered locus">PHZ_c2890</name>
</gene>
<sequence>MAVYTDITDDELAKLLADFDLGAPLSFKGIAEGVENSNFLLETEGGRFILTVYEKRVRAEDLPFFLGLMRWLSEHGFASGLPMADRGGEMLKTVRGKPCAIVSFLPGLSVRRPTVAHCREAGKGLAALHNAADGFPMRRENDLGQGAWAPMFERLKDDAERLKPGLAEVIARDVADLADRWPQGLPEGVIHADYFPDNVFFKEGVFAGAIDFYFACNDIRAYDIAVALNAWCFEADGSFNITAARALVAGYEAVRPLSEAERAALPVLAHGAALRFFLTRLHDWHATPAGALVKPKDPLEYERKLAVHRTSPDLVLFGAAAAE</sequence>
<reference key="1">
    <citation type="journal article" date="2008" name="BMC Genomics">
        <title>Complete genome of Phenylobacterium zucineum - a novel facultative intracellular bacterium isolated from human erythroleukemia cell line K562.</title>
        <authorList>
            <person name="Luo Y."/>
            <person name="Xu X."/>
            <person name="Ding Z."/>
            <person name="Liu Z."/>
            <person name="Zhang B."/>
            <person name="Yan Z."/>
            <person name="Sun J."/>
            <person name="Hu S."/>
            <person name="Hu X."/>
        </authorList>
    </citation>
    <scope>NUCLEOTIDE SEQUENCE [LARGE SCALE GENOMIC DNA]</scope>
    <source>
        <strain>HLK1</strain>
    </source>
</reference>
<accession>B4R8T4</accession>
<keyword id="KW-0028">Amino-acid biosynthesis</keyword>
<keyword id="KW-0067">ATP-binding</keyword>
<keyword id="KW-0418">Kinase</keyword>
<keyword id="KW-0547">Nucleotide-binding</keyword>
<keyword id="KW-1185">Reference proteome</keyword>
<keyword id="KW-0791">Threonine biosynthesis</keyword>
<keyword id="KW-0808">Transferase</keyword>
<comment type="catalytic activity">
    <reaction evidence="1">
        <text>L-homoserine + ATP = O-phospho-L-homoserine + ADP + H(+)</text>
        <dbReference type="Rhea" id="RHEA:13985"/>
        <dbReference type="ChEBI" id="CHEBI:15378"/>
        <dbReference type="ChEBI" id="CHEBI:30616"/>
        <dbReference type="ChEBI" id="CHEBI:57476"/>
        <dbReference type="ChEBI" id="CHEBI:57590"/>
        <dbReference type="ChEBI" id="CHEBI:456216"/>
        <dbReference type="EC" id="2.7.1.39"/>
    </reaction>
</comment>
<comment type="pathway">
    <text evidence="1">Amino-acid biosynthesis; L-threonine biosynthesis; L-threonine from L-aspartate: step 4/5.</text>
</comment>
<comment type="similarity">
    <text evidence="1">Belongs to the pseudomonas-type ThrB family.</text>
</comment>